<sequence>MLPLYRFPQEASALQERLVRHVSFDEAAHKAVDEILAKVRQQGDRAVLNYTEQFQGVRLTSMQVDEEAIEMAYRHADPSLIATLHEAYANIVRFHEHEVERSFFYEAEGGVLLGQRVRPMERAMLYVPGGKAAYPSSLLMNAAPAKVAGVCEIAVTTPCDATGVVNPTILAAAKVAGISSIYKIGGAQAVAAFAYGTESIPKVDIITGPGNKYVALAKKQVFGHVAIDSIAGPSEVVIIADESAHAEFVALDMFAQAEHDPDASAVLITTSESFAQAVQQAVASLLPTMLRHETIASSLLHNGAMVLVPSLDDACAVSDMLAPEHLELHVVQPWDILPKLKHAGAIFMGSYSCETIGDYFAGPNHTLPTSGTARFFSPLSVRDFVKHTSIISYSPEQLRSKGAQIAAFADAEGLQAHAEAVRVRLKTL</sequence>
<comment type="function">
    <text evidence="1">Catalyzes the sequential NAD-dependent oxidations of L-histidinol to L-histidinaldehyde and then to L-histidine.</text>
</comment>
<comment type="catalytic activity">
    <reaction evidence="1">
        <text>L-histidinol + 2 NAD(+) + H2O = L-histidine + 2 NADH + 3 H(+)</text>
        <dbReference type="Rhea" id="RHEA:20641"/>
        <dbReference type="ChEBI" id="CHEBI:15377"/>
        <dbReference type="ChEBI" id="CHEBI:15378"/>
        <dbReference type="ChEBI" id="CHEBI:57540"/>
        <dbReference type="ChEBI" id="CHEBI:57595"/>
        <dbReference type="ChEBI" id="CHEBI:57699"/>
        <dbReference type="ChEBI" id="CHEBI:57945"/>
        <dbReference type="EC" id="1.1.1.23"/>
    </reaction>
</comment>
<comment type="cofactor">
    <cofactor evidence="1">
        <name>Zn(2+)</name>
        <dbReference type="ChEBI" id="CHEBI:29105"/>
    </cofactor>
    <text evidence="1">Binds 1 zinc ion per subunit.</text>
</comment>
<comment type="pathway">
    <text evidence="1">Amino-acid biosynthesis; L-histidine biosynthesis; L-histidine from 5-phospho-alpha-D-ribose 1-diphosphate: step 9/9.</text>
</comment>
<comment type="similarity">
    <text evidence="1">Belongs to the histidinol dehydrogenase family.</text>
</comment>
<accession>Q3AR25</accession>
<gene>
    <name evidence="1" type="primary">hisD</name>
    <name type="ordered locus">Cag_1289</name>
</gene>
<reference key="1">
    <citation type="submission" date="2005-08" db="EMBL/GenBank/DDBJ databases">
        <title>Complete sequence of Chlorobium chlorochromatii CaD3.</title>
        <authorList>
            <consortium name="US DOE Joint Genome Institute"/>
            <person name="Copeland A."/>
            <person name="Lucas S."/>
            <person name="Lapidus A."/>
            <person name="Barry K."/>
            <person name="Detter J.C."/>
            <person name="Glavina T."/>
            <person name="Hammon N."/>
            <person name="Israni S."/>
            <person name="Pitluck S."/>
            <person name="Bryant D."/>
            <person name="Schmutz J."/>
            <person name="Larimer F."/>
            <person name="Land M."/>
            <person name="Kyrpides N."/>
            <person name="Ivanova N."/>
            <person name="Richardson P."/>
        </authorList>
    </citation>
    <scope>NUCLEOTIDE SEQUENCE [LARGE SCALE GENOMIC DNA]</scope>
    <source>
        <strain>CaD3</strain>
    </source>
</reference>
<organism>
    <name type="scientific">Chlorobium chlorochromatii (strain CaD3)</name>
    <dbReference type="NCBI Taxonomy" id="340177"/>
    <lineage>
        <taxon>Bacteria</taxon>
        <taxon>Pseudomonadati</taxon>
        <taxon>Chlorobiota</taxon>
        <taxon>Chlorobiia</taxon>
        <taxon>Chlorobiales</taxon>
        <taxon>Chlorobiaceae</taxon>
        <taxon>Chlorobium/Pelodictyon group</taxon>
        <taxon>Chlorobium</taxon>
    </lineage>
</organism>
<proteinExistence type="inferred from homology"/>
<name>HISX_CHLCH</name>
<feature type="chain" id="PRO_0000229855" description="Histidinol dehydrogenase">
    <location>
        <begin position="1"/>
        <end position="428"/>
    </location>
</feature>
<feature type="active site" description="Proton acceptor" evidence="1">
    <location>
        <position position="324"/>
    </location>
</feature>
<feature type="active site" description="Proton acceptor" evidence="1">
    <location>
        <position position="325"/>
    </location>
</feature>
<feature type="binding site" evidence="1">
    <location>
        <position position="126"/>
    </location>
    <ligand>
        <name>NAD(+)</name>
        <dbReference type="ChEBI" id="CHEBI:57540"/>
    </ligand>
</feature>
<feature type="binding site" evidence="1">
    <location>
        <position position="188"/>
    </location>
    <ligand>
        <name>NAD(+)</name>
        <dbReference type="ChEBI" id="CHEBI:57540"/>
    </ligand>
</feature>
<feature type="binding site" evidence="1">
    <location>
        <position position="211"/>
    </location>
    <ligand>
        <name>NAD(+)</name>
        <dbReference type="ChEBI" id="CHEBI:57540"/>
    </ligand>
</feature>
<feature type="binding site" evidence="1">
    <location>
        <position position="234"/>
    </location>
    <ligand>
        <name>substrate</name>
    </ligand>
</feature>
<feature type="binding site" evidence="1">
    <location>
        <position position="256"/>
    </location>
    <ligand>
        <name>substrate</name>
    </ligand>
</feature>
<feature type="binding site" evidence="1">
    <location>
        <position position="256"/>
    </location>
    <ligand>
        <name>Zn(2+)</name>
        <dbReference type="ChEBI" id="CHEBI:29105"/>
    </ligand>
</feature>
<feature type="binding site" evidence="1">
    <location>
        <position position="259"/>
    </location>
    <ligand>
        <name>substrate</name>
    </ligand>
</feature>
<feature type="binding site" evidence="1">
    <location>
        <position position="259"/>
    </location>
    <ligand>
        <name>Zn(2+)</name>
        <dbReference type="ChEBI" id="CHEBI:29105"/>
    </ligand>
</feature>
<feature type="binding site" evidence="1">
    <location>
        <position position="325"/>
    </location>
    <ligand>
        <name>substrate</name>
    </ligand>
</feature>
<feature type="binding site" evidence="1">
    <location>
        <position position="358"/>
    </location>
    <ligand>
        <name>substrate</name>
    </ligand>
</feature>
<feature type="binding site" evidence="1">
    <location>
        <position position="358"/>
    </location>
    <ligand>
        <name>Zn(2+)</name>
        <dbReference type="ChEBI" id="CHEBI:29105"/>
    </ligand>
</feature>
<feature type="binding site" evidence="1">
    <location>
        <position position="412"/>
    </location>
    <ligand>
        <name>substrate</name>
    </ligand>
</feature>
<feature type="binding site" evidence="1">
    <location>
        <position position="417"/>
    </location>
    <ligand>
        <name>substrate</name>
    </ligand>
</feature>
<feature type="binding site" evidence="1">
    <location>
        <position position="417"/>
    </location>
    <ligand>
        <name>Zn(2+)</name>
        <dbReference type="ChEBI" id="CHEBI:29105"/>
    </ligand>
</feature>
<keyword id="KW-0028">Amino-acid biosynthesis</keyword>
<keyword id="KW-0368">Histidine biosynthesis</keyword>
<keyword id="KW-0479">Metal-binding</keyword>
<keyword id="KW-0520">NAD</keyword>
<keyword id="KW-0560">Oxidoreductase</keyword>
<keyword id="KW-0862">Zinc</keyword>
<evidence type="ECO:0000255" key="1">
    <source>
        <dbReference type="HAMAP-Rule" id="MF_01024"/>
    </source>
</evidence>
<protein>
    <recommendedName>
        <fullName evidence="1">Histidinol dehydrogenase</fullName>
        <shortName evidence="1">HDH</shortName>
        <ecNumber evidence="1">1.1.1.23</ecNumber>
    </recommendedName>
</protein>
<dbReference type="EC" id="1.1.1.23" evidence="1"/>
<dbReference type="EMBL" id="CP000108">
    <property type="protein sequence ID" value="ABB28550.1"/>
    <property type="molecule type" value="Genomic_DNA"/>
</dbReference>
<dbReference type="SMR" id="Q3AR25"/>
<dbReference type="STRING" id="340177.Cag_1289"/>
<dbReference type="KEGG" id="cch:Cag_1289"/>
<dbReference type="eggNOG" id="COG0141">
    <property type="taxonomic scope" value="Bacteria"/>
</dbReference>
<dbReference type="HOGENOM" id="CLU_006732_3_3_10"/>
<dbReference type="OrthoDB" id="9805269at2"/>
<dbReference type="UniPathway" id="UPA00031">
    <property type="reaction ID" value="UER00014"/>
</dbReference>
<dbReference type="GO" id="GO:0005829">
    <property type="term" value="C:cytosol"/>
    <property type="evidence" value="ECO:0007669"/>
    <property type="project" value="TreeGrafter"/>
</dbReference>
<dbReference type="GO" id="GO:0004399">
    <property type="term" value="F:histidinol dehydrogenase activity"/>
    <property type="evidence" value="ECO:0007669"/>
    <property type="project" value="UniProtKB-UniRule"/>
</dbReference>
<dbReference type="GO" id="GO:0051287">
    <property type="term" value="F:NAD binding"/>
    <property type="evidence" value="ECO:0007669"/>
    <property type="project" value="InterPro"/>
</dbReference>
<dbReference type="GO" id="GO:0008270">
    <property type="term" value="F:zinc ion binding"/>
    <property type="evidence" value="ECO:0007669"/>
    <property type="project" value="UniProtKB-UniRule"/>
</dbReference>
<dbReference type="GO" id="GO:0000105">
    <property type="term" value="P:L-histidine biosynthetic process"/>
    <property type="evidence" value="ECO:0007669"/>
    <property type="project" value="UniProtKB-UniRule"/>
</dbReference>
<dbReference type="CDD" id="cd06572">
    <property type="entry name" value="Histidinol_dh"/>
    <property type="match status" value="1"/>
</dbReference>
<dbReference type="FunFam" id="3.40.50.1980:FF:000001">
    <property type="entry name" value="Histidinol dehydrogenase"/>
    <property type="match status" value="1"/>
</dbReference>
<dbReference type="FunFam" id="3.40.50.1980:FF:000026">
    <property type="entry name" value="Histidinol dehydrogenase"/>
    <property type="match status" value="1"/>
</dbReference>
<dbReference type="Gene3D" id="1.20.5.1300">
    <property type="match status" value="1"/>
</dbReference>
<dbReference type="Gene3D" id="3.40.50.1980">
    <property type="entry name" value="Nitrogenase molybdenum iron protein domain"/>
    <property type="match status" value="2"/>
</dbReference>
<dbReference type="HAMAP" id="MF_01024">
    <property type="entry name" value="HisD"/>
    <property type="match status" value="1"/>
</dbReference>
<dbReference type="InterPro" id="IPR016161">
    <property type="entry name" value="Ald_DH/histidinol_DH"/>
</dbReference>
<dbReference type="InterPro" id="IPR001692">
    <property type="entry name" value="Histidinol_DH_CS"/>
</dbReference>
<dbReference type="InterPro" id="IPR022695">
    <property type="entry name" value="Histidinol_DH_monofunct"/>
</dbReference>
<dbReference type="InterPro" id="IPR012131">
    <property type="entry name" value="Hstdl_DH"/>
</dbReference>
<dbReference type="NCBIfam" id="TIGR00069">
    <property type="entry name" value="hisD"/>
    <property type="match status" value="1"/>
</dbReference>
<dbReference type="PANTHER" id="PTHR21256:SF2">
    <property type="entry name" value="HISTIDINE BIOSYNTHESIS TRIFUNCTIONAL PROTEIN"/>
    <property type="match status" value="1"/>
</dbReference>
<dbReference type="PANTHER" id="PTHR21256">
    <property type="entry name" value="HISTIDINOL DEHYDROGENASE HDH"/>
    <property type="match status" value="1"/>
</dbReference>
<dbReference type="Pfam" id="PF00815">
    <property type="entry name" value="Histidinol_dh"/>
    <property type="match status" value="1"/>
</dbReference>
<dbReference type="PIRSF" id="PIRSF000099">
    <property type="entry name" value="Histidinol_dh"/>
    <property type="match status" value="1"/>
</dbReference>
<dbReference type="PRINTS" id="PR00083">
    <property type="entry name" value="HOLDHDRGNASE"/>
</dbReference>
<dbReference type="SUPFAM" id="SSF53720">
    <property type="entry name" value="ALDH-like"/>
    <property type="match status" value="1"/>
</dbReference>
<dbReference type="PROSITE" id="PS00611">
    <property type="entry name" value="HISOL_DEHYDROGENASE"/>
    <property type="match status" value="1"/>
</dbReference>